<gene>
    <name evidence="1" type="primary">thrS</name>
    <name type="ordered locus">SG1784</name>
</gene>
<protein>
    <recommendedName>
        <fullName evidence="1">Threonine--tRNA ligase</fullName>
        <ecNumber evidence="1">6.1.1.3</ecNumber>
    </recommendedName>
    <alternativeName>
        <fullName evidence="1">Threonyl-tRNA synthetase</fullName>
        <shortName evidence="1">ThrRS</shortName>
    </alternativeName>
</protein>
<organism>
    <name type="scientific">Salmonella gallinarum (strain 287/91 / NCTC 13346)</name>
    <dbReference type="NCBI Taxonomy" id="550538"/>
    <lineage>
        <taxon>Bacteria</taxon>
        <taxon>Pseudomonadati</taxon>
        <taxon>Pseudomonadota</taxon>
        <taxon>Gammaproteobacteria</taxon>
        <taxon>Enterobacterales</taxon>
        <taxon>Enterobacteriaceae</taxon>
        <taxon>Salmonella</taxon>
    </lineage>
</organism>
<feature type="chain" id="PRO_1000098608" description="Threonine--tRNA ligase">
    <location>
        <begin position="1"/>
        <end position="642"/>
    </location>
</feature>
<feature type="domain" description="TGS" evidence="2">
    <location>
        <begin position="1"/>
        <end position="61"/>
    </location>
</feature>
<feature type="region of interest" description="Catalytic" evidence="1">
    <location>
        <begin position="243"/>
        <end position="534"/>
    </location>
</feature>
<feature type="binding site" evidence="1">
    <location>
        <position position="334"/>
    </location>
    <ligand>
        <name>Zn(2+)</name>
        <dbReference type="ChEBI" id="CHEBI:29105"/>
    </ligand>
</feature>
<feature type="binding site" evidence="1">
    <location>
        <position position="385"/>
    </location>
    <ligand>
        <name>Zn(2+)</name>
        <dbReference type="ChEBI" id="CHEBI:29105"/>
    </ligand>
</feature>
<feature type="binding site" evidence="1">
    <location>
        <position position="511"/>
    </location>
    <ligand>
        <name>Zn(2+)</name>
        <dbReference type="ChEBI" id="CHEBI:29105"/>
    </ligand>
</feature>
<reference key="1">
    <citation type="journal article" date="2008" name="Genome Res.">
        <title>Comparative genome analysis of Salmonella enteritidis PT4 and Salmonella gallinarum 287/91 provides insights into evolutionary and host adaptation pathways.</title>
        <authorList>
            <person name="Thomson N.R."/>
            <person name="Clayton D.J."/>
            <person name="Windhorst D."/>
            <person name="Vernikos G."/>
            <person name="Davidson S."/>
            <person name="Churcher C."/>
            <person name="Quail M.A."/>
            <person name="Stevens M."/>
            <person name="Jones M.A."/>
            <person name="Watson M."/>
            <person name="Barron A."/>
            <person name="Layton A."/>
            <person name="Pickard D."/>
            <person name="Kingsley R.A."/>
            <person name="Bignell A."/>
            <person name="Clark L."/>
            <person name="Harris B."/>
            <person name="Ormond D."/>
            <person name="Abdellah Z."/>
            <person name="Brooks K."/>
            <person name="Cherevach I."/>
            <person name="Chillingworth T."/>
            <person name="Woodward J."/>
            <person name="Norberczak H."/>
            <person name="Lord A."/>
            <person name="Arrowsmith C."/>
            <person name="Jagels K."/>
            <person name="Moule S."/>
            <person name="Mungall K."/>
            <person name="Saunders M."/>
            <person name="Whitehead S."/>
            <person name="Chabalgoity J.A."/>
            <person name="Maskell D."/>
            <person name="Humphreys T."/>
            <person name="Roberts M."/>
            <person name="Barrow P.A."/>
            <person name="Dougan G."/>
            <person name="Parkhill J."/>
        </authorList>
    </citation>
    <scope>NUCLEOTIDE SEQUENCE [LARGE SCALE GENOMIC DNA]</scope>
    <source>
        <strain>287/91 / NCTC 13346</strain>
    </source>
</reference>
<evidence type="ECO:0000255" key="1">
    <source>
        <dbReference type="HAMAP-Rule" id="MF_00184"/>
    </source>
</evidence>
<evidence type="ECO:0000255" key="2">
    <source>
        <dbReference type="PROSITE-ProRule" id="PRU01228"/>
    </source>
</evidence>
<keyword id="KW-0030">Aminoacyl-tRNA synthetase</keyword>
<keyword id="KW-0067">ATP-binding</keyword>
<keyword id="KW-0963">Cytoplasm</keyword>
<keyword id="KW-0436">Ligase</keyword>
<keyword id="KW-0479">Metal-binding</keyword>
<keyword id="KW-0547">Nucleotide-binding</keyword>
<keyword id="KW-0648">Protein biosynthesis</keyword>
<keyword id="KW-0694">RNA-binding</keyword>
<keyword id="KW-0820">tRNA-binding</keyword>
<keyword id="KW-0862">Zinc</keyword>
<sequence>MPVITLPDGSQRHYDHPVSPMDVALDIGPGLAKATIAGRVNGELVDASDLIENDATLAIITAKDEEGLEIIRHSCAHLLGHAIKQLWPHTKMAIGPVVDNGFYYDVDLDRTLTQEDVEALEKRMHELAEKNYDVIKKKVSWHDARETFVKRGETYKVAILDENIAHDDKPGLYHHEEYVDMCRGPHVPNMRFCHHFKLMKTAGAYWRGDSNNKMLQRIYGTAWADKKALNAYLQRLEEAAKRDHRKIGKQLDLYHMQEEAPGMVFWHNDGWTIFRELEVFVRSKLKEYQYQEVKGPFMMGRVLWEKTGHWDNYKDAMFTTSSENREYCIKPMNCPGHVQIFNQGLKSYRDLPLRMAEFGSCHRNEPSGALHGLMRVRGFTQDDAHIFCTEEQIRDEVNACIRMVYDMYSTFGFEKIVVKLSTRPDKRIGSDEMWDRAEADLAVALEENNIPFEYQLGEGAFYGPKIEFTLYDCLDRAWQCGTVQLDFSLPSRLSASYVGEDNERKVPVMIHRAILGSMERFIGILTEEFAGFFPTWLAPVQVVVMNITDSQSEYVNELTQKLQNAGIRVKADLRNEKIGFKIREHTLRRVPYMLVCGDKEVEAGKVAVRTRRGKDLGSLDVNDVIEKLQQEIRSRSLQQLEE</sequence>
<accession>B5RAX3</accession>
<proteinExistence type="inferred from homology"/>
<comment type="function">
    <text evidence="1">Catalyzes the attachment of threonine to tRNA(Thr) in a two-step reaction: L-threonine is first activated by ATP to form Thr-AMP and then transferred to the acceptor end of tRNA(Thr). Also edits incorrectly charged L-seryl-tRNA(Thr).</text>
</comment>
<comment type="catalytic activity">
    <reaction evidence="1">
        <text>tRNA(Thr) + L-threonine + ATP = L-threonyl-tRNA(Thr) + AMP + diphosphate + H(+)</text>
        <dbReference type="Rhea" id="RHEA:24624"/>
        <dbReference type="Rhea" id="RHEA-COMP:9670"/>
        <dbReference type="Rhea" id="RHEA-COMP:9704"/>
        <dbReference type="ChEBI" id="CHEBI:15378"/>
        <dbReference type="ChEBI" id="CHEBI:30616"/>
        <dbReference type="ChEBI" id="CHEBI:33019"/>
        <dbReference type="ChEBI" id="CHEBI:57926"/>
        <dbReference type="ChEBI" id="CHEBI:78442"/>
        <dbReference type="ChEBI" id="CHEBI:78534"/>
        <dbReference type="ChEBI" id="CHEBI:456215"/>
        <dbReference type="EC" id="6.1.1.3"/>
    </reaction>
</comment>
<comment type="cofactor">
    <cofactor evidence="1">
        <name>Zn(2+)</name>
        <dbReference type="ChEBI" id="CHEBI:29105"/>
    </cofactor>
    <text evidence="1">Binds 1 zinc ion per subunit.</text>
</comment>
<comment type="subunit">
    <text evidence="1">Homodimer.</text>
</comment>
<comment type="subcellular location">
    <subcellularLocation>
        <location evidence="1">Cytoplasm</location>
    </subcellularLocation>
</comment>
<comment type="similarity">
    <text evidence="1">Belongs to the class-II aminoacyl-tRNA synthetase family.</text>
</comment>
<name>SYT_SALG2</name>
<dbReference type="EC" id="6.1.1.3" evidence="1"/>
<dbReference type="EMBL" id="AM933173">
    <property type="protein sequence ID" value="CAR37641.1"/>
    <property type="molecule type" value="Genomic_DNA"/>
</dbReference>
<dbReference type="RefSeq" id="WP_001144218.1">
    <property type="nucleotide sequence ID" value="NC_011274.1"/>
</dbReference>
<dbReference type="SMR" id="B5RAX3"/>
<dbReference type="KEGG" id="seg:SG1784"/>
<dbReference type="HOGENOM" id="CLU_008554_0_1_6"/>
<dbReference type="Proteomes" id="UP000008321">
    <property type="component" value="Chromosome"/>
</dbReference>
<dbReference type="GO" id="GO:0005829">
    <property type="term" value="C:cytosol"/>
    <property type="evidence" value="ECO:0007669"/>
    <property type="project" value="TreeGrafter"/>
</dbReference>
<dbReference type="GO" id="GO:0005524">
    <property type="term" value="F:ATP binding"/>
    <property type="evidence" value="ECO:0007669"/>
    <property type="project" value="UniProtKB-UniRule"/>
</dbReference>
<dbReference type="GO" id="GO:0046872">
    <property type="term" value="F:metal ion binding"/>
    <property type="evidence" value="ECO:0007669"/>
    <property type="project" value="UniProtKB-KW"/>
</dbReference>
<dbReference type="GO" id="GO:0004829">
    <property type="term" value="F:threonine-tRNA ligase activity"/>
    <property type="evidence" value="ECO:0007669"/>
    <property type="project" value="UniProtKB-UniRule"/>
</dbReference>
<dbReference type="GO" id="GO:0000049">
    <property type="term" value="F:tRNA binding"/>
    <property type="evidence" value="ECO:0007669"/>
    <property type="project" value="UniProtKB-KW"/>
</dbReference>
<dbReference type="GO" id="GO:0006435">
    <property type="term" value="P:threonyl-tRNA aminoacylation"/>
    <property type="evidence" value="ECO:0007669"/>
    <property type="project" value="UniProtKB-UniRule"/>
</dbReference>
<dbReference type="CDD" id="cd01667">
    <property type="entry name" value="TGS_ThrRS"/>
    <property type="match status" value="1"/>
</dbReference>
<dbReference type="CDD" id="cd00860">
    <property type="entry name" value="ThrRS_anticodon"/>
    <property type="match status" value="1"/>
</dbReference>
<dbReference type="CDD" id="cd00771">
    <property type="entry name" value="ThrRS_core"/>
    <property type="match status" value="1"/>
</dbReference>
<dbReference type="FunFam" id="3.10.20.30:FF:000005">
    <property type="entry name" value="Threonine--tRNA ligase"/>
    <property type="match status" value="1"/>
</dbReference>
<dbReference type="FunFam" id="3.30.54.20:FF:000002">
    <property type="entry name" value="Threonine--tRNA ligase"/>
    <property type="match status" value="1"/>
</dbReference>
<dbReference type="FunFam" id="3.30.930.10:FF:000002">
    <property type="entry name" value="Threonine--tRNA ligase"/>
    <property type="match status" value="1"/>
</dbReference>
<dbReference type="FunFam" id="3.40.50.800:FF:000001">
    <property type="entry name" value="Threonine--tRNA ligase"/>
    <property type="match status" value="1"/>
</dbReference>
<dbReference type="FunFam" id="3.30.980.10:FF:000005">
    <property type="entry name" value="Threonyl-tRNA synthetase, mitochondrial"/>
    <property type="match status" value="1"/>
</dbReference>
<dbReference type="Gene3D" id="3.10.20.30">
    <property type="match status" value="1"/>
</dbReference>
<dbReference type="Gene3D" id="3.30.54.20">
    <property type="match status" value="1"/>
</dbReference>
<dbReference type="Gene3D" id="3.40.50.800">
    <property type="entry name" value="Anticodon-binding domain"/>
    <property type="match status" value="1"/>
</dbReference>
<dbReference type="Gene3D" id="3.30.930.10">
    <property type="entry name" value="Bira Bifunctional Protein, Domain 2"/>
    <property type="match status" value="1"/>
</dbReference>
<dbReference type="Gene3D" id="3.30.980.10">
    <property type="entry name" value="Threonyl-trna Synthetase, Chain A, domain 2"/>
    <property type="match status" value="1"/>
</dbReference>
<dbReference type="HAMAP" id="MF_00184">
    <property type="entry name" value="Thr_tRNA_synth"/>
    <property type="match status" value="1"/>
</dbReference>
<dbReference type="InterPro" id="IPR002314">
    <property type="entry name" value="aa-tRNA-synt_IIb"/>
</dbReference>
<dbReference type="InterPro" id="IPR006195">
    <property type="entry name" value="aa-tRNA-synth_II"/>
</dbReference>
<dbReference type="InterPro" id="IPR045864">
    <property type="entry name" value="aa-tRNA-synth_II/BPL/LPL"/>
</dbReference>
<dbReference type="InterPro" id="IPR004154">
    <property type="entry name" value="Anticodon-bd"/>
</dbReference>
<dbReference type="InterPro" id="IPR036621">
    <property type="entry name" value="Anticodon-bd_dom_sf"/>
</dbReference>
<dbReference type="InterPro" id="IPR012675">
    <property type="entry name" value="Beta-grasp_dom_sf"/>
</dbReference>
<dbReference type="InterPro" id="IPR004095">
    <property type="entry name" value="TGS"/>
</dbReference>
<dbReference type="InterPro" id="IPR012676">
    <property type="entry name" value="TGS-like"/>
</dbReference>
<dbReference type="InterPro" id="IPR002320">
    <property type="entry name" value="Thr-tRNA-ligase_IIa"/>
</dbReference>
<dbReference type="InterPro" id="IPR018163">
    <property type="entry name" value="Thr/Ala-tRNA-synth_IIc_edit"/>
</dbReference>
<dbReference type="InterPro" id="IPR047246">
    <property type="entry name" value="ThrRS_anticodon"/>
</dbReference>
<dbReference type="InterPro" id="IPR033728">
    <property type="entry name" value="ThrRS_core"/>
</dbReference>
<dbReference type="InterPro" id="IPR012947">
    <property type="entry name" value="tRNA_SAD"/>
</dbReference>
<dbReference type="NCBIfam" id="TIGR00418">
    <property type="entry name" value="thrS"/>
    <property type="match status" value="1"/>
</dbReference>
<dbReference type="PANTHER" id="PTHR11451:SF44">
    <property type="entry name" value="THREONINE--TRNA LIGASE, CHLOROPLASTIC_MITOCHONDRIAL 2"/>
    <property type="match status" value="1"/>
</dbReference>
<dbReference type="PANTHER" id="PTHR11451">
    <property type="entry name" value="THREONINE-TRNA LIGASE"/>
    <property type="match status" value="1"/>
</dbReference>
<dbReference type="Pfam" id="PF03129">
    <property type="entry name" value="HGTP_anticodon"/>
    <property type="match status" value="1"/>
</dbReference>
<dbReference type="Pfam" id="PF02824">
    <property type="entry name" value="TGS"/>
    <property type="match status" value="1"/>
</dbReference>
<dbReference type="Pfam" id="PF00587">
    <property type="entry name" value="tRNA-synt_2b"/>
    <property type="match status" value="1"/>
</dbReference>
<dbReference type="Pfam" id="PF07973">
    <property type="entry name" value="tRNA_SAD"/>
    <property type="match status" value="1"/>
</dbReference>
<dbReference type="PRINTS" id="PR01047">
    <property type="entry name" value="TRNASYNTHTHR"/>
</dbReference>
<dbReference type="SMART" id="SM00863">
    <property type="entry name" value="tRNA_SAD"/>
    <property type="match status" value="1"/>
</dbReference>
<dbReference type="SUPFAM" id="SSF52954">
    <property type="entry name" value="Class II aaRS ABD-related"/>
    <property type="match status" value="1"/>
</dbReference>
<dbReference type="SUPFAM" id="SSF55681">
    <property type="entry name" value="Class II aaRS and biotin synthetases"/>
    <property type="match status" value="1"/>
</dbReference>
<dbReference type="SUPFAM" id="SSF81271">
    <property type="entry name" value="TGS-like"/>
    <property type="match status" value="1"/>
</dbReference>
<dbReference type="SUPFAM" id="SSF55186">
    <property type="entry name" value="ThrRS/AlaRS common domain"/>
    <property type="match status" value="1"/>
</dbReference>
<dbReference type="PROSITE" id="PS50862">
    <property type="entry name" value="AA_TRNA_LIGASE_II"/>
    <property type="match status" value="1"/>
</dbReference>
<dbReference type="PROSITE" id="PS51880">
    <property type="entry name" value="TGS"/>
    <property type="match status" value="1"/>
</dbReference>